<proteinExistence type="inferred from homology"/>
<reference key="1">
    <citation type="journal article" date="1991" name="Virus Res.">
        <title>Nucleotide sequence of human papillomavirus (HPV) type 41: an unusual HPV type without a typical E2 binding site consensus sequence.</title>
        <authorList>
            <person name="Hirt L."/>
            <person name="Hirsch-Behnam A."/>
            <person name="de Villiers E.M."/>
        </authorList>
    </citation>
    <scope>NUCLEOTIDE SEQUENCE [GENOMIC DNA]</scope>
</reference>
<name>VE2_HPV41</name>
<gene>
    <name evidence="1" type="primary">E2</name>
</gene>
<feature type="chain" id="PRO_0000133221" description="Regulatory protein E2">
    <location>
        <begin position="1"/>
        <end position="387"/>
    </location>
</feature>
<feature type="region of interest" description="Transactivation domain" evidence="1">
    <location>
        <begin position="1"/>
        <end position="205"/>
    </location>
</feature>
<feature type="region of interest" description="Disordered" evidence="2">
    <location>
        <begin position="204"/>
        <end position="295"/>
    </location>
</feature>
<feature type="region of interest" description="DNA-binding domain" evidence="1">
    <location>
        <begin position="303"/>
        <end position="387"/>
    </location>
</feature>
<feature type="compositionally biased region" description="Basic residues" evidence="2">
    <location>
        <begin position="241"/>
        <end position="258"/>
    </location>
</feature>
<feature type="compositionally biased region" description="Basic residues" evidence="2">
    <location>
        <begin position="285"/>
        <end position="295"/>
    </location>
</feature>
<feature type="cross-link" description="Glycyl lysine isopeptide (Lys-Gly) (interchain with G-Cter in SUMO)" evidence="1">
    <location>
        <position position="310"/>
    </location>
</feature>
<accession>P27552</accession>
<organism>
    <name type="scientific">Human papillomavirus type 41</name>
    <dbReference type="NCBI Taxonomy" id="10589"/>
    <lineage>
        <taxon>Viruses</taxon>
        <taxon>Monodnaviria</taxon>
        <taxon>Shotokuvirae</taxon>
        <taxon>Cossaviricota</taxon>
        <taxon>Papovaviricetes</taxon>
        <taxon>Zurhausenvirales</taxon>
        <taxon>Papillomaviridae</taxon>
        <taxon>Firstpapillomavirinae</taxon>
        <taxon>Nupapillomavirus</taxon>
        <taxon>Nupapillomavirus 1</taxon>
    </lineage>
</organism>
<dbReference type="EMBL" id="X56147">
    <property type="protein sequence ID" value="CAA39615.1"/>
    <property type="molecule type" value="Genomic_DNA"/>
</dbReference>
<dbReference type="PIR" id="D43550">
    <property type="entry name" value="W2WL41"/>
</dbReference>
<dbReference type="SMR" id="P27552"/>
<dbReference type="KEGG" id="vg:1489278"/>
<dbReference type="OrthoDB" id="15886at10239"/>
<dbReference type="Proteomes" id="UP000006367">
    <property type="component" value="Genome"/>
</dbReference>
<dbReference type="GO" id="GO:0042025">
    <property type="term" value="C:host cell nucleus"/>
    <property type="evidence" value="ECO:0007669"/>
    <property type="project" value="UniProtKB-SubCell"/>
</dbReference>
<dbReference type="GO" id="GO:0003677">
    <property type="term" value="F:DNA binding"/>
    <property type="evidence" value="ECO:0007669"/>
    <property type="project" value="UniProtKB-UniRule"/>
</dbReference>
<dbReference type="GO" id="GO:0003700">
    <property type="term" value="F:DNA-binding transcription factor activity"/>
    <property type="evidence" value="ECO:0007669"/>
    <property type="project" value="UniProtKB-UniRule"/>
</dbReference>
<dbReference type="GO" id="GO:0000166">
    <property type="term" value="F:nucleotide binding"/>
    <property type="evidence" value="ECO:0007669"/>
    <property type="project" value="UniProtKB-UniRule"/>
</dbReference>
<dbReference type="GO" id="GO:0006260">
    <property type="term" value="P:DNA replication"/>
    <property type="evidence" value="ECO:0007669"/>
    <property type="project" value="UniProtKB-KW"/>
</dbReference>
<dbReference type="GO" id="GO:0006351">
    <property type="term" value="P:DNA-templated transcription"/>
    <property type="evidence" value="ECO:0007669"/>
    <property type="project" value="UniProtKB-UniRule"/>
</dbReference>
<dbReference type="GO" id="GO:0006275">
    <property type="term" value="P:regulation of DNA replication"/>
    <property type="evidence" value="ECO:0007669"/>
    <property type="project" value="UniProtKB-UniRule"/>
</dbReference>
<dbReference type="GO" id="GO:0039693">
    <property type="term" value="P:viral DNA genome replication"/>
    <property type="evidence" value="ECO:0007669"/>
    <property type="project" value="UniProtKB-UniRule"/>
</dbReference>
<dbReference type="Gene3D" id="3.30.70.330">
    <property type="match status" value="1"/>
</dbReference>
<dbReference type="Gene3D" id="1.10.287.30">
    <property type="entry name" value="E2 (early) protein, N terminal domain, subdomain 1"/>
    <property type="match status" value="1"/>
</dbReference>
<dbReference type="Gene3D" id="2.170.200.10">
    <property type="entry name" value="Papillomavirus E2 early protein domain"/>
    <property type="match status" value="1"/>
</dbReference>
<dbReference type="HAMAP" id="MF_04001">
    <property type="entry name" value="PPV_E2"/>
    <property type="match status" value="1"/>
</dbReference>
<dbReference type="InterPro" id="IPR035975">
    <property type="entry name" value="E2/EBNA1_C_sf"/>
</dbReference>
<dbReference type="InterPro" id="IPR012677">
    <property type="entry name" value="Nucleotide-bd_a/b_plait_sf"/>
</dbReference>
<dbReference type="InterPro" id="IPR000427">
    <property type="entry name" value="Papillomavirus_E2_C"/>
</dbReference>
<dbReference type="InterPro" id="IPR001866">
    <property type="entry name" value="PPV_E2_N"/>
</dbReference>
<dbReference type="InterPro" id="IPR033668">
    <property type="entry name" value="Reg_prot_E2"/>
</dbReference>
<dbReference type="InterPro" id="IPR036050">
    <property type="entry name" value="Regulatory_protein_E2_N"/>
</dbReference>
<dbReference type="InterPro" id="IPR042503">
    <property type="entry name" value="Regulatory_protein_E2_N_1"/>
</dbReference>
<dbReference type="InterPro" id="IPR042504">
    <property type="entry name" value="Regulatory_protein_E2_N_2"/>
</dbReference>
<dbReference type="Pfam" id="PF00511">
    <property type="entry name" value="PPV_E2_C"/>
    <property type="match status" value="1"/>
</dbReference>
<dbReference type="Pfam" id="PF00508">
    <property type="entry name" value="PPV_E2_N"/>
    <property type="match status" value="1"/>
</dbReference>
<dbReference type="SUPFAM" id="SSF51332">
    <property type="entry name" value="E2 regulatory, transactivation domain"/>
    <property type="match status" value="1"/>
</dbReference>
<dbReference type="SUPFAM" id="SSF54957">
    <property type="entry name" value="Viral DNA-binding domain"/>
    <property type="match status" value="1"/>
</dbReference>
<protein>
    <recommendedName>
        <fullName evidence="1">Regulatory protein E2</fullName>
    </recommendedName>
</protein>
<keyword id="KW-0010">Activator</keyword>
<keyword id="KW-0235">DNA replication</keyword>
<keyword id="KW-0238">DNA-binding</keyword>
<keyword id="KW-0244">Early protein</keyword>
<keyword id="KW-1048">Host nucleus</keyword>
<keyword id="KW-1017">Isopeptide bond</keyword>
<keyword id="KW-0597">Phosphoprotein</keyword>
<keyword id="KW-1185">Reference proteome</keyword>
<keyword id="KW-0678">Repressor</keyword>
<keyword id="KW-0804">Transcription</keyword>
<keyword id="KW-0805">Transcription regulation</keyword>
<keyword id="KW-0832">Ubl conjugation</keyword>
<sequence length="387" mass="44230">MSQMERLLERLDYIQEQILTLYEKDSVDLEDHIRLWNLLRRENAIWYVLRQEGHARVGGRAVPAMTVSEANAKFAIEMQIKLESLKASPYAAEGWSLQETTKERYLAEPSRTFKKLGQPVTLMFDNDPENLTEVVLWKWVYYITPTDEWYKARGGIDDTGIYYIDHESVKMYYVRFDMEAENFSETGTVTYRLGSALVNVPEPVTVTDSSSTRERTPKVLRPQGSRRRRNEETGEPVAPAPKRRRGAYGRRSSPKAQRRTAASPVSRGNGGSSDFTSGESDEGHRVRHRALRKKTAGVAPAEGHYLVGAKGPVNSLRCLRYKWKNKYSGDIMYLGTTFTWTESDGTERCGSGRFFCAFSNETKREKFLKSVKIPKNIGLFRAHAEKL</sequence>
<comment type="function">
    <text evidence="1">Plays a role in the initiation of viral DNA replication. A dimer of E2 interacts with a dimer of E1 in order to improve specificity of E1 DNA binding activity. Once the complex recognizes and binds DNA at specific sites, the E2 dimer is removed from DNA. E2 also regulates viral transcription through binding to the E2RE response element (5'-ACCNNNNNNGGT-3') present in multiple copies in the regulatory regions of the viral genome. Activates or represses transcription depending on E2RE's position with regards to proximal promoter elements including the TATA-box. Repression occurs by sterically hindering the assembly of the transcription initiation complex.</text>
</comment>
<comment type="subunit">
    <text evidence="1">Binds DNA as homodimer. Interacts with protein E1; this interaction greatly increases E1 DNA-binding activity. Interacts with protein L1; this interaction enhances E2-dependent replication and transcription activation. Interacts with protein L2; this interaction inhibits E2 transcriptional activity but not DNA replication function E2. Interacts with protein E7; this interaction inhibits E7 oncogenic activity. Interacts with host TAF1; this interaction modulates E2-dependent transcriptional regulation. Interacts with host BRD4; this interaction mediates E2 transcriptional activation function. Additionally, the interaction with host BRD4 on mitotic chromosomes mediates tethering of the viral genome. Interacts with host TOPBP1; this interaction is required for optimal viral DNA replication.</text>
</comment>
<comment type="subcellular location">
    <subcellularLocation>
        <location evidence="1">Host nucleus</location>
    </subcellularLocation>
</comment>
<comment type="PTM">
    <text evidence="1">Phosphorylated.</text>
</comment>
<comment type="PTM">
    <text evidence="1">Sumoylation plays a regulatory role in E2 transcriptional activity.</text>
</comment>
<comment type="similarity">
    <text evidence="1">Belongs to the papillomaviridae E2 protein family.</text>
</comment>
<evidence type="ECO:0000255" key="1">
    <source>
        <dbReference type="HAMAP-Rule" id="MF_04001"/>
    </source>
</evidence>
<evidence type="ECO:0000256" key="2">
    <source>
        <dbReference type="SAM" id="MobiDB-lite"/>
    </source>
</evidence>
<organismHost>
    <name type="scientific">Homo sapiens</name>
    <name type="common">Human</name>
    <dbReference type="NCBI Taxonomy" id="9606"/>
</organismHost>